<comment type="function">
    <text evidence="1">Catalyzes the addition and repair of the essential 3'-terminal CCA sequence in tRNAs without using a nucleic acid template. Adds these three nucleotides in the order of C, C, and A to the tRNA nucleotide-73, using CTP and ATP as substrates and producing inorganic pyrophosphate. tRNA 3'-terminal CCA addition is required both for tRNA processing and repair. Also involved in tRNA surveillance by mediating tandem CCA addition to generate a CCACCA at the 3' terminus of unstable tRNAs. While stable tRNAs receive only 3'-terminal CCA, unstable tRNAs are marked with CCACCA and rapidly degraded.</text>
</comment>
<comment type="catalytic activity">
    <reaction evidence="1">
        <text>a tRNA precursor + 2 CTP + ATP = a tRNA with a 3' CCA end + 3 diphosphate</text>
        <dbReference type="Rhea" id="RHEA:14433"/>
        <dbReference type="Rhea" id="RHEA-COMP:10465"/>
        <dbReference type="Rhea" id="RHEA-COMP:10468"/>
        <dbReference type="ChEBI" id="CHEBI:30616"/>
        <dbReference type="ChEBI" id="CHEBI:33019"/>
        <dbReference type="ChEBI" id="CHEBI:37563"/>
        <dbReference type="ChEBI" id="CHEBI:74896"/>
        <dbReference type="ChEBI" id="CHEBI:83071"/>
        <dbReference type="EC" id="2.7.7.72"/>
    </reaction>
</comment>
<comment type="catalytic activity">
    <reaction evidence="1">
        <text>a tRNA with a 3' CCA end + 2 CTP + ATP = a tRNA with a 3' CCACCA end + 3 diphosphate</text>
        <dbReference type="Rhea" id="RHEA:76235"/>
        <dbReference type="Rhea" id="RHEA-COMP:10468"/>
        <dbReference type="Rhea" id="RHEA-COMP:18655"/>
        <dbReference type="ChEBI" id="CHEBI:30616"/>
        <dbReference type="ChEBI" id="CHEBI:33019"/>
        <dbReference type="ChEBI" id="CHEBI:37563"/>
        <dbReference type="ChEBI" id="CHEBI:83071"/>
        <dbReference type="ChEBI" id="CHEBI:195187"/>
    </reaction>
    <physiologicalReaction direction="left-to-right" evidence="1">
        <dbReference type="Rhea" id="RHEA:76236"/>
    </physiologicalReaction>
</comment>
<comment type="cofactor">
    <cofactor evidence="1">
        <name>Mg(2+)</name>
        <dbReference type="ChEBI" id="CHEBI:18420"/>
    </cofactor>
    <text evidence="1">Magnesium is required for nucleotidyltransferase activity.</text>
</comment>
<comment type="cofactor">
    <cofactor evidence="1">
        <name>Ni(2+)</name>
        <dbReference type="ChEBI" id="CHEBI:49786"/>
    </cofactor>
    <text evidence="1">Nickel for phosphatase activity.</text>
</comment>
<comment type="subunit">
    <text evidence="1">Monomer. Can also form homodimers and oligomers.</text>
</comment>
<comment type="domain">
    <text evidence="1">Comprises two domains: an N-terminal domain containing the nucleotidyltransferase activity and a C-terminal HD domain associated with both phosphodiesterase and phosphatase activities.</text>
</comment>
<comment type="miscellaneous">
    <text evidence="1">A single active site specifically recognizes both ATP and CTP and is responsible for their addition.</text>
</comment>
<comment type="similarity">
    <text evidence="1">Belongs to the tRNA nucleotidyltransferase/poly(A) polymerase family. Bacterial CCA-adding enzyme type 1 subfamily.</text>
</comment>
<proteinExistence type="inferred from homology"/>
<organism>
    <name type="scientific">Xanthomonas campestris pv. campestris (strain ATCC 33913 / DSM 3586 / NCPPB 528 / LMG 568 / P 25)</name>
    <dbReference type="NCBI Taxonomy" id="190485"/>
    <lineage>
        <taxon>Bacteria</taxon>
        <taxon>Pseudomonadati</taxon>
        <taxon>Pseudomonadota</taxon>
        <taxon>Gammaproteobacteria</taxon>
        <taxon>Lysobacterales</taxon>
        <taxon>Lysobacteraceae</taxon>
        <taxon>Xanthomonas</taxon>
    </lineage>
</organism>
<reference key="1">
    <citation type="journal article" date="2002" name="Nature">
        <title>Comparison of the genomes of two Xanthomonas pathogens with differing host specificities.</title>
        <authorList>
            <person name="da Silva A.C.R."/>
            <person name="Ferro J.A."/>
            <person name="Reinach F.C."/>
            <person name="Farah C.S."/>
            <person name="Furlan L.R."/>
            <person name="Quaggio R.B."/>
            <person name="Monteiro-Vitorello C.B."/>
            <person name="Van Sluys M.A."/>
            <person name="Almeida N.F. Jr."/>
            <person name="Alves L.M.C."/>
            <person name="do Amaral A.M."/>
            <person name="Bertolini M.C."/>
            <person name="Camargo L.E.A."/>
            <person name="Camarotte G."/>
            <person name="Cannavan F."/>
            <person name="Cardozo J."/>
            <person name="Chambergo F."/>
            <person name="Ciapina L.P."/>
            <person name="Cicarelli R.M.B."/>
            <person name="Coutinho L.L."/>
            <person name="Cursino-Santos J.R."/>
            <person name="El-Dorry H."/>
            <person name="Faria J.B."/>
            <person name="Ferreira A.J.S."/>
            <person name="Ferreira R.C.C."/>
            <person name="Ferro M.I.T."/>
            <person name="Formighieri E.F."/>
            <person name="Franco M.C."/>
            <person name="Greggio C.C."/>
            <person name="Gruber A."/>
            <person name="Katsuyama A.M."/>
            <person name="Kishi L.T."/>
            <person name="Leite R.P."/>
            <person name="Lemos E.G.M."/>
            <person name="Lemos M.V.F."/>
            <person name="Locali E.C."/>
            <person name="Machado M.A."/>
            <person name="Madeira A.M.B.N."/>
            <person name="Martinez-Rossi N.M."/>
            <person name="Martins E.C."/>
            <person name="Meidanis J."/>
            <person name="Menck C.F.M."/>
            <person name="Miyaki C.Y."/>
            <person name="Moon D.H."/>
            <person name="Moreira L.M."/>
            <person name="Novo M.T.M."/>
            <person name="Okura V.K."/>
            <person name="Oliveira M.C."/>
            <person name="Oliveira V.R."/>
            <person name="Pereira H.A."/>
            <person name="Rossi A."/>
            <person name="Sena J.A.D."/>
            <person name="Silva C."/>
            <person name="de Souza R.F."/>
            <person name="Spinola L.A.F."/>
            <person name="Takita M.A."/>
            <person name="Tamura R.E."/>
            <person name="Teixeira E.C."/>
            <person name="Tezza R.I.D."/>
            <person name="Trindade dos Santos M."/>
            <person name="Truffi D."/>
            <person name="Tsai S.M."/>
            <person name="White F.F."/>
            <person name="Setubal J.C."/>
            <person name="Kitajima J.P."/>
        </authorList>
    </citation>
    <scope>NUCLEOTIDE SEQUENCE [LARGE SCALE GENOMIC DNA]</scope>
    <source>
        <strain>ATCC 33913 / DSM 3586 / NCPPB 528 / LMG 568 / P 25</strain>
    </source>
</reference>
<keyword id="KW-0067">ATP-binding</keyword>
<keyword id="KW-0378">Hydrolase</keyword>
<keyword id="KW-0460">Magnesium</keyword>
<keyword id="KW-0479">Metal-binding</keyword>
<keyword id="KW-0511">Multifunctional enzyme</keyword>
<keyword id="KW-0533">Nickel</keyword>
<keyword id="KW-0547">Nucleotide-binding</keyword>
<keyword id="KW-0548">Nucleotidyltransferase</keyword>
<keyword id="KW-1185">Reference proteome</keyword>
<keyword id="KW-0692">RNA repair</keyword>
<keyword id="KW-0694">RNA-binding</keyword>
<keyword id="KW-0808">Transferase</keyword>
<keyword id="KW-0819">tRNA processing</keyword>
<feature type="chain" id="PRO_0000139008" description="Multifunctional CCA protein">
    <location>
        <begin position="1"/>
        <end position="410"/>
    </location>
</feature>
<feature type="domain" description="HD" evidence="1">
    <location>
        <begin position="229"/>
        <end position="347"/>
    </location>
</feature>
<feature type="binding site" evidence="1">
    <location>
        <position position="8"/>
    </location>
    <ligand>
        <name>ATP</name>
        <dbReference type="ChEBI" id="CHEBI:30616"/>
    </ligand>
</feature>
<feature type="binding site" evidence="1">
    <location>
        <position position="8"/>
    </location>
    <ligand>
        <name>CTP</name>
        <dbReference type="ChEBI" id="CHEBI:37563"/>
    </ligand>
</feature>
<feature type="binding site" evidence="1">
    <location>
        <position position="11"/>
    </location>
    <ligand>
        <name>ATP</name>
        <dbReference type="ChEBI" id="CHEBI:30616"/>
    </ligand>
</feature>
<feature type="binding site" evidence="1">
    <location>
        <position position="11"/>
    </location>
    <ligand>
        <name>CTP</name>
        <dbReference type="ChEBI" id="CHEBI:37563"/>
    </ligand>
</feature>
<feature type="binding site" evidence="1">
    <location>
        <position position="21"/>
    </location>
    <ligand>
        <name>Mg(2+)</name>
        <dbReference type="ChEBI" id="CHEBI:18420"/>
    </ligand>
</feature>
<feature type="binding site" evidence="1">
    <location>
        <position position="23"/>
    </location>
    <ligand>
        <name>Mg(2+)</name>
        <dbReference type="ChEBI" id="CHEBI:18420"/>
    </ligand>
</feature>
<feature type="binding site" evidence="1">
    <location>
        <position position="91"/>
    </location>
    <ligand>
        <name>ATP</name>
        <dbReference type="ChEBI" id="CHEBI:30616"/>
    </ligand>
</feature>
<feature type="binding site" evidence="1">
    <location>
        <position position="91"/>
    </location>
    <ligand>
        <name>CTP</name>
        <dbReference type="ChEBI" id="CHEBI:37563"/>
    </ligand>
</feature>
<feature type="binding site" evidence="1">
    <location>
        <position position="138"/>
    </location>
    <ligand>
        <name>ATP</name>
        <dbReference type="ChEBI" id="CHEBI:30616"/>
    </ligand>
</feature>
<feature type="binding site" evidence="1">
    <location>
        <position position="138"/>
    </location>
    <ligand>
        <name>CTP</name>
        <dbReference type="ChEBI" id="CHEBI:37563"/>
    </ligand>
</feature>
<feature type="binding site" evidence="1">
    <location>
        <position position="141"/>
    </location>
    <ligand>
        <name>ATP</name>
        <dbReference type="ChEBI" id="CHEBI:30616"/>
    </ligand>
</feature>
<feature type="binding site" evidence="1">
    <location>
        <position position="141"/>
    </location>
    <ligand>
        <name>CTP</name>
        <dbReference type="ChEBI" id="CHEBI:37563"/>
    </ligand>
</feature>
<evidence type="ECO:0000255" key="1">
    <source>
        <dbReference type="HAMAP-Rule" id="MF_01261"/>
    </source>
</evidence>
<sequence>MKIYLVGGAVRDALLGQPAGDRDWVVVGADQAQMQALGYKPVGKDFPVFLHPRSGEEYALARTERKSGRGYRGFVVDADPSVTLEEDLLRRDFTINAIARDEASGEVFDPYGGVRDLQQRVLRHVGPAFVEDPVRVLRAARFMARLAPLGFGIAPETAALMREMADSGELDSLVPERVWQELRRVLGSAQPSAFLRTLHDTGALRAILPELDALYGVPQRAEFHPEVDTGVHQEMVSDMAARLAPGDALVGFAALTHDLGKALTPPEQWPRHVMHEQRGVAPLQALCERLKVPQDYRQLAVTACREHLNVHRLPELRDRTVHELLVRCDGFRRPERIAQLALVCEADKRGRLGSEEAAYPQGPELQRVHAAALAINARDLAADGLQGPQIGEALASARIAAIAQARSLRQ</sequence>
<gene>
    <name evidence="1" type="primary">cca</name>
    <name type="ordered locus">XCC3407</name>
</gene>
<dbReference type="EC" id="2.7.7.72" evidence="1"/>
<dbReference type="EC" id="3.1.3.-" evidence="1"/>
<dbReference type="EC" id="3.1.4.-" evidence="1"/>
<dbReference type="EMBL" id="AE008922">
    <property type="protein sequence ID" value="AAM42677.1"/>
    <property type="molecule type" value="Genomic_DNA"/>
</dbReference>
<dbReference type="RefSeq" id="NP_638753.1">
    <property type="nucleotide sequence ID" value="NC_003902.1"/>
</dbReference>
<dbReference type="RefSeq" id="WP_011038505.1">
    <property type="nucleotide sequence ID" value="NC_003902.1"/>
</dbReference>
<dbReference type="SMR" id="Q8P5D4"/>
<dbReference type="STRING" id="190485.XCC3407"/>
<dbReference type="EnsemblBacteria" id="AAM42677">
    <property type="protein sequence ID" value="AAM42677"/>
    <property type="gene ID" value="XCC3407"/>
</dbReference>
<dbReference type="KEGG" id="xcc:XCC3407"/>
<dbReference type="PATRIC" id="fig|190485.4.peg.3644"/>
<dbReference type="eggNOG" id="COG0617">
    <property type="taxonomic scope" value="Bacteria"/>
</dbReference>
<dbReference type="HOGENOM" id="CLU_015961_1_1_6"/>
<dbReference type="OrthoDB" id="9805698at2"/>
<dbReference type="Proteomes" id="UP000001010">
    <property type="component" value="Chromosome"/>
</dbReference>
<dbReference type="GO" id="GO:0005524">
    <property type="term" value="F:ATP binding"/>
    <property type="evidence" value="ECO:0007669"/>
    <property type="project" value="UniProtKB-UniRule"/>
</dbReference>
<dbReference type="GO" id="GO:0004810">
    <property type="term" value="F:CCA tRNA nucleotidyltransferase activity"/>
    <property type="evidence" value="ECO:0007669"/>
    <property type="project" value="UniProtKB-UniRule"/>
</dbReference>
<dbReference type="GO" id="GO:0160016">
    <property type="term" value="F:CCACCA tRNA nucleotidyltransferase activity"/>
    <property type="evidence" value="ECO:0000318"/>
    <property type="project" value="GO_Central"/>
</dbReference>
<dbReference type="GO" id="GO:0004112">
    <property type="term" value="F:cyclic-nucleotide phosphodiesterase activity"/>
    <property type="evidence" value="ECO:0007669"/>
    <property type="project" value="UniProtKB-UniRule"/>
</dbReference>
<dbReference type="GO" id="GO:0000287">
    <property type="term" value="F:magnesium ion binding"/>
    <property type="evidence" value="ECO:0007669"/>
    <property type="project" value="UniProtKB-UniRule"/>
</dbReference>
<dbReference type="GO" id="GO:0016791">
    <property type="term" value="F:phosphatase activity"/>
    <property type="evidence" value="ECO:0007669"/>
    <property type="project" value="UniProtKB-UniRule"/>
</dbReference>
<dbReference type="GO" id="GO:0000049">
    <property type="term" value="F:tRNA binding"/>
    <property type="evidence" value="ECO:0007669"/>
    <property type="project" value="UniProtKB-UniRule"/>
</dbReference>
<dbReference type="GO" id="GO:0042245">
    <property type="term" value="P:RNA repair"/>
    <property type="evidence" value="ECO:0007669"/>
    <property type="project" value="UniProtKB-KW"/>
</dbReference>
<dbReference type="GO" id="GO:0001680">
    <property type="term" value="P:tRNA 3'-terminal CCA addition"/>
    <property type="evidence" value="ECO:0000318"/>
    <property type="project" value="GO_Central"/>
</dbReference>
<dbReference type="GO" id="GO:0106354">
    <property type="term" value="P:tRNA surveillance"/>
    <property type="evidence" value="ECO:0000318"/>
    <property type="project" value="GO_Central"/>
</dbReference>
<dbReference type="CDD" id="cd05398">
    <property type="entry name" value="NT_ClassII-CCAase"/>
    <property type="match status" value="1"/>
</dbReference>
<dbReference type="Gene3D" id="3.30.460.10">
    <property type="entry name" value="Beta Polymerase, domain 2"/>
    <property type="match status" value="1"/>
</dbReference>
<dbReference type="Gene3D" id="1.10.3090.10">
    <property type="entry name" value="cca-adding enzyme, domain 2"/>
    <property type="match status" value="1"/>
</dbReference>
<dbReference type="HAMAP" id="MF_01261">
    <property type="entry name" value="CCA_bact_type1"/>
    <property type="match status" value="1"/>
</dbReference>
<dbReference type="InterPro" id="IPR012006">
    <property type="entry name" value="CCA_bact"/>
</dbReference>
<dbReference type="InterPro" id="IPR006674">
    <property type="entry name" value="HD_domain"/>
</dbReference>
<dbReference type="InterPro" id="IPR043519">
    <property type="entry name" value="NT_sf"/>
</dbReference>
<dbReference type="InterPro" id="IPR002646">
    <property type="entry name" value="PolA_pol_head_dom"/>
</dbReference>
<dbReference type="InterPro" id="IPR032828">
    <property type="entry name" value="PolyA_RNA-bd"/>
</dbReference>
<dbReference type="InterPro" id="IPR050124">
    <property type="entry name" value="tRNA_CCA-adding_enzyme"/>
</dbReference>
<dbReference type="NCBIfam" id="NF008137">
    <property type="entry name" value="PRK10885.1"/>
    <property type="match status" value="1"/>
</dbReference>
<dbReference type="PANTHER" id="PTHR47545">
    <property type="entry name" value="MULTIFUNCTIONAL CCA PROTEIN"/>
    <property type="match status" value="1"/>
</dbReference>
<dbReference type="PANTHER" id="PTHR47545:SF1">
    <property type="entry name" value="MULTIFUNCTIONAL CCA PROTEIN"/>
    <property type="match status" value="1"/>
</dbReference>
<dbReference type="Pfam" id="PF01966">
    <property type="entry name" value="HD"/>
    <property type="match status" value="1"/>
</dbReference>
<dbReference type="Pfam" id="PF01743">
    <property type="entry name" value="PolyA_pol"/>
    <property type="match status" value="1"/>
</dbReference>
<dbReference type="Pfam" id="PF12627">
    <property type="entry name" value="PolyA_pol_RNAbd"/>
    <property type="match status" value="1"/>
</dbReference>
<dbReference type="PIRSF" id="PIRSF000813">
    <property type="entry name" value="CCA_bact"/>
    <property type="match status" value="1"/>
</dbReference>
<dbReference type="SUPFAM" id="SSF81301">
    <property type="entry name" value="Nucleotidyltransferase"/>
    <property type="match status" value="1"/>
</dbReference>
<dbReference type="SUPFAM" id="SSF81891">
    <property type="entry name" value="Poly A polymerase C-terminal region-like"/>
    <property type="match status" value="1"/>
</dbReference>
<dbReference type="PROSITE" id="PS51831">
    <property type="entry name" value="HD"/>
    <property type="match status" value="1"/>
</dbReference>
<accession>Q8P5D4</accession>
<protein>
    <recommendedName>
        <fullName evidence="1">Multifunctional CCA protein</fullName>
    </recommendedName>
    <domain>
        <recommendedName>
            <fullName evidence="1">CCA-adding enzyme</fullName>
            <ecNumber evidence="1">2.7.7.72</ecNumber>
        </recommendedName>
        <alternativeName>
            <fullName evidence="1">CCA tRNA nucleotidyltransferase</fullName>
        </alternativeName>
        <alternativeName>
            <fullName evidence="1">tRNA CCA-pyrophosphorylase</fullName>
        </alternativeName>
        <alternativeName>
            <fullName evidence="1">tRNA adenylyl-/cytidylyl-transferase</fullName>
        </alternativeName>
        <alternativeName>
            <fullName evidence="1">tRNA nucleotidyltransferase</fullName>
        </alternativeName>
        <alternativeName>
            <fullName evidence="1">tRNA-NT</fullName>
        </alternativeName>
    </domain>
    <domain>
        <recommendedName>
            <fullName evidence="1">2'-nucleotidase</fullName>
            <ecNumber evidence="1">3.1.3.-</ecNumber>
        </recommendedName>
    </domain>
    <domain>
        <recommendedName>
            <fullName evidence="1">2',3'-cyclic phosphodiesterase</fullName>
            <ecNumber evidence="1">3.1.4.-</ecNumber>
        </recommendedName>
    </domain>
    <domain>
        <recommendedName>
            <fullName evidence="1">Phosphatase</fullName>
            <ecNumber evidence="1">3.1.3.-</ecNumber>
        </recommendedName>
    </domain>
</protein>
<name>CCA_XANCP</name>